<gene>
    <name evidence="1" type="primary">prfA</name>
    <name type="ordered locus">NT01CX_0548</name>
</gene>
<comment type="function">
    <text evidence="1">Peptide chain release factor 1 directs the termination of translation in response to the peptide chain termination codons UAG and UAA.</text>
</comment>
<comment type="subcellular location">
    <subcellularLocation>
        <location evidence="1">Cytoplasm</location>
    </subcellularLocation>
</comment>
<comment type="PTM">
    <text evidence="1">Methylated by PrmC. Methylation increases the termination efficiency of RF1.</text>
</comment>
<comment type="similarity">
    <text evidence="1">Belongs to the prokaryotic/mitochondrial release factor family.</text>
</comment>
<name>RF1_CLONN</name>
<evidence type="ECO:0000255" key="1">
    <source>
        <dbReference type="HAMAP-Rule" id="MF_00093"/>
    </source>
</evidence>
<evidence type="ECO:0000256" key="2">
    <source>
        <dbReference type="SAM" id="MobiDB-lite"/>
    </source>
</evidence>
<dbReference type="EMBL" id="CP000382">
    <property type="protein sequence ID" value="ABK61194.1"/>
    <property type="molecule type" value="Genomic_DNA"/>
</dbReference>
<dbReference type="RefSeq" id="WP_011722993.1">
    <property type="nucleotide sequence ID" value="NC_008593.1"/>
</dbReference>
<dbReference type="SMR" id="A0Q312"/>
<dbReference type="STRING" id="386415.NT01CX_0548"/>
<dbReference type="KEGG" id="cno:NT01CX_0548"/>
<dbReference type="eggNOG" id="COG0216">
    <property type="taxonomic scope" value="Bacteria"/>
</dbReference>
<dbReference type="HOGENOM" id="CLU_036856_0_1_9"/>
<dbReference type="Proteomes" id="UP000008220">
    <property type="component" value="Chromosome"/>
</dbReference>
<dbReference type="GO" id="GO:0005737">
    <property type="term" value="C:cytoplasm"/>
    <property type="evidence" value="ECO:0007669"/>
    <property type="project" value="UniProtKB-SubCell"/>
</dbReference>
<dbReference type="GO" id="GO:0016149">
    <property type="term" value="F:translation release factor activity, codon specific"/>
    <property type="evidence" value="ECO:0007669"/>
    <property type="project" value="UniProtKB-UniRule"/>
</dbReference>
<dbReference type="FunFam" id="3.30.160.20:FF:000004">
    <property type="entry name" value="Peptide chain release factor 1"/>
    <property type="match status" value="1"/>
</dbReference>
<dbReference type="FunFam" id="3.30.70.1660:FF:000002">
    <property type="entry name" value="Peptide chain release factor 1"/>
    <property type="match status" value="1"/>
</dbReference>
<dbReference type="FunFam" id="3.30.70.1660:FF:000004">
    <property type="entry name" value="Peptide chain release factor 1"/>
    <property type="match status" value="1"/>
</dbReference>
<dbReference type="Gene3D" id="3.30.160.20">
    <property type="match status" value="1"/>
</dbReference>
<dbReference type="Gene3D" id="3.30.70.1660">
    <property type="match status" value="2"/>
</dbReference>
<dbReference type="Gene3D" id="6.10.140.1950">
    <property type="match status" value="1"/>
</dbReference>
<dbReference type="HAMAP" id="MF_00093">
    <property type="entry name" value="Rel_fac_1"/>
    <property type="match status" value="1"/>
</dbReference>
<dbReference type="InterPro" id="IPR005139">
    <property type="entry name" value="PCRF"/>
</dbReference>
<dbReference type="InterPro" id="IPR000352">
    <property type="entry name" value="Pep_chain_release_fac_I"/>
</dbReference>
<dbReference type="InterPro" id="IPR045853">
    <property type="entry name" value="Pep_chain_release_fac_I_sf"/>
</dbReference>
<dbReference type="InterPro" id="IPR050057">
    <property type="entry name" value="Prokaryotic/Mito_RF"/>
</dbReference>
<dbReference type="InterPro" id="IPR004373">
    <property type="entry name" value="RF-1"/>
</dbReference>
<dbReference type="NCBIfam" id="TIGR00019">
    <property type="entry name" value="prfA"/>
    <property type="match status" value="1"/>
</dbReference>
<dbReference type="NCBIfam" id="NF001859">
    <property type="entry name" value="PRK00591.1"/>
    <property type="match status" value="1"/>
</dbReference>
<dbReference type="PANTHER" id="PTHR43804">
    <property type="entry name" value="LD18447P"/>
    <property type="match status" value="1"/>
</dbReference>
<dbReference type="PANTHER" id="PTHR43804:SF7">
    <property type="entry name" value="LD18447P"/>
    <property type="match status" value="1"/>
</dbReference>
<dbReference type="Pfam" id="PF03462">
    <property type="entry name" value="PCRF"/>
    <property type="match status" value="1"/>
</dbReference>
<dbReference type="Pfam" id="PF00472">
    <property type="entry name" value="RF-1"/>
    <property type="match status" value="1"/>
</dbReference>
<dbReference type="SMART" id="SM00937">
    <property type="entry name" value="PCRF"/>
    <property type="match status" value="1"/>
</dbReference>
<dbReference type="SUPFAM" id="SSF75620">
    <property type="entry name" value="Release factor"/>
    <property type="match status" value="1"/>
</dbReference>
<dbReference type="PROSITE" id="PS00745">
    <property type="entry name" value="RF_PROK_I"/>
    <property type="match status" value="1"/>
</dbReference>
<protein>
    <recommendedName>
        <fullName evidence="1">Peptide chain release factor 1</fullName>
        <shortName evidence="1">RF-1</shortName>
    </recommendedName>
</protein>
<accession>A0Q312</accession>
<keyword id="KW-0963">Cytoplasm</keyword>
<keyword id="KW-0488">Methylation</keyword>
<keyword id="KW-0648">Protein biosynthesis</keyword>
<keyword id="KW-1185">Reference proteome</keyword>
<proteinExistence type="inferred from homology"/>
<organism>
    <name type="scientific">Clostridium novyi (strain NT)</name>
    <dbReference type="NCBI Taxonomy" id="386415"/>
    <lineage>
        <taxon>Bacteria</taxon>
        <taxon>Bacillati</taxon>
        <taxon>Bacillota</taxon>
        <taxon>Clostridia</taxon>
        <taxon>Eubacteriales</taxon>
        <taxon>Clostridiaceae</taxon>
        <taxon>Clostridium</taxon>
    </lineage>
</organism>
<sequence length="357" mass="40591">MLDKLEFTENKYEELSIKISDPSVMANQNEWRKLCKEHAELETIVTKYREYKTNKEELEANKEMLSEETDKDMKEMIQEEIKTLEESIVKDQEELKILLLPKDPNDDKNVFIEIRAGAGGDEAALFAANLFRMYTRYAERHGWKTELMSANETDIGGFKEVVFMLRGDCAYSKMKFESGVHRVQRVPDTESSGRIHTSTATVAVLPEVDDVDIQIDPNDIRVDVFRASGHGGQCVNTTDSAVRMTHIPTGIVVSCQDEKSQLKNKEKAMKVLKARLYEKAEAERSASISADRKSQVGTGDRSERIRTYNYPQGRVTEHRIGLTLYKLEAFLDGDMEEVIDALITAEQAEKMKAMGNN</sequence>
<reference key="1">
    <citation type="journal article" date="2006" name="Nat. Biotechnol.">
        <title>The genome and transcriptomes of the anti-tumor agent Clostridium novyi-NT.</title>
        <authorList>
            <person name="Bettegowda C."/>
            <person name="Huang X."/>
            <person name="Lin J."/>
            <person name="Cheong I."/>
            <person name="Kohli M."/>
            <person name="Szabo S.A."/>
            <person name="Zhang X."/>
            <person name="Diaz L.A. Jr."/>
            <person name="Velculescu V.E."/>
            <person name="Parmigiani G."/>
            <person name="Kinzler K.W."/>
            <person name="Vogelstein B."/>
            <person name="Zhou S."/>
        </authorList>
    </citation>
    <scope>NUCLEOTIDE SEQUENCE [LARGE SCALE GENOMIC DNA]</scope>
    <source>
        <strain>NT</strain>
    </source>
</reference>
<feature type="chain" id="PRO_1000004883" description="Peptide chain release factor 1">
    <location>
        <begin position="1"/>
        <end position="357"/>
    </location>
</feature>
<feature type="region of interest" description="Disordered" evidence="2">
    <location>
        <begin position="284"/>
        <end position="305"/>
    </location>
</feature>
<feature type="modified residue" description="N5-methylglutamine" evidence="1">
    <location>
        <position position="233"/>
    </location>
</feature>